<dbReference type="EMBL" id="U31348">
    <property type="protein sequence ID" value="AAC49072.1"/>
    <property type="molecule type" value="Genomic_DNA"/>
</dbReference>
<dbReference type="EMBL" id="X97644">
    <property type="protein sequence ID" value="CAA66247.1"/>
    <property type="molecule type" value="Genomic_DNA"/>
</dbReference>
<dbReference type="EMBL" id="Z72627">
    <property type="protein sequence ID" value="CAA96812.1"/>
    <property type="molecule type" value="Genomic_DNA"/>
</dbReference>
<dbReference type="EMBL" id="X95481">
    <property type="protein sequence ID" value="CAA64750.1"/>
    <property type="molecule type" value="Genomic_DNA"/>
</dbReference>
<dbReference type="EMBL" id="AY558498">
    <property type="protein sequence ID" value="AAS56824.1"/>
    <property type="molecule type" value="Genomic_DNA"/>
</dbReference>
<dbReference type="EMBL" id="BK006941">
    <property type="protein sequence ID" value="DAA08002.1"/>
    <property type="molecule type" value="Genomic_DNA"/>
</dbReference>
<dbReference type="PIR" id="S64113">
    <property type="entry name" value="S64113"/>
</dbReference>
<dbReference type="RefSeq" id="NP_011410.1">
    <property type="nucleotide sequence ID" value="NM_001180970.1"/>
</dbReference>
<dbReference type="PDB" id="2HQT">
    <property type="method" value="X-ray"/>
    <property type="resolution" value="1.90 A"/>
    <property type="chains" value="A/B/C/D/E/F/G/H/I/J/K/L/M/N/O/P/Q/R/S/T=1-122"/>
</dbReference>
<dbReference type="PDB" id="2HRK">
    <property type="method" value="X-ray"/>
    <property type="resolution" value="2.05 A"/>
    <property type="chains" value="B=1-122"/>
</dbReference>
<dbReference type="PDB" id="2HSM">
    <property type="method" value="X-ray"/>
    <property type="resolution" value="3.00 A"/>
    <property type="chains" value="B=1-122"/>
</dbReference>
<dbReference type="PDB" id="2HSN">
    <property type="method" value="X-ray"/>
    <property type="resolution" value="2.20 A"/>
    <property type="chains" value="B=1-122"/>
</dbReference>
<dbReference type="PDB" id="4R1J">
    <property type="method" value="X-ray"/>
    <property type="resolution" value="1.40 A"/>
    <property type="chains" value="A=201-376"/>
</dbReference>
<dbReference type="PDBsum" id="2HQT"/>
<dbReference type="PDBsum" id="2HRK"/>
<dbReference type="PDBsum" id="2HSM"/>
<dbReference type="PDBsum" id="2HSN"/>
<dbReference type="PDBsum" id="4R1J"/>
<dbReference type="SMR" id="P46672"/>
<dbReference type="BioGRID" id="33145">
    <property type="interactions" value="254"/>
</dbReference>
<dbReference type="ComplexPortal" id="CPX-1947">
    <property type="entry name" value="Methionyl glutamyl tRNA synthetase complex"/>
</dbReference>
<dbReference type="DIP" id="DIP-2210N"/>
<dbReference type="FunCoup" id="P46672">
    <property type="interactions" value="421"/>
</dbReference>
<dbReference type="IntAct" id="P46672">
    <property type="interactions" value="25"/>
</dbReference>
<dbReference type="MINT" id="P46672"/>
<dbReference type="STRING" id="4932.YGL105W"/>
<dbReference type="iPTMnet" id="P46672"/>
<dbReference type="PaxDb" id="4932-YGL105W"/>
<dbReference type="PeptideAtlas" id="P46672"/>
<dbReference type="TopDownProteomics" id="P46672"/>
<dbReference type="EnsemblFungi" id="YGL105W_mRNA">
    <property type="protein sequence ID" value="YGL105W"/>
    <property type="gene ID" value="YGL105W"/>
</dbReference>
<dbReference type="GeneID" id="852773"/>
<dbReference type="KEGG" id="sce:YGL105W"/>
<dbReference type="AGR" id="SGD:S000003073"/>
<dbReference type="SGD" id="S000003073">
    <property type="gene designation" value="ARC1"/>
</dbReference>
<dbReference type="VEuPathDB" id="FungiDB:YGL105W"/>
<dbReference type="eggNOG" id="KOG2241">
    <property type="taxonomic scope" value="Eukaryota"/>
</dbReference>
<dbReference type="GeneTree" id="ENSGT00940000154950"/>
<dbReference type="HOGENOM" id="CLU_009710_6_6_1"/>
<dbReference type="InParanoid" id="P46672"/>
<dbReference type="OMA" id="DIFYFCS"/>
<dbReference type="OrthoDB" id="19141at2759"/>
<dbReference type="BioCyc" id="YEAST:G3O-30604-MONOMER"/>
<dbReference type="BioGRID-ORCS" id="852773">
    <property type="hits" value="10 hits in 10 CRISPR screens"/>
</dbReference>
<dbReference type="CD-CODE" id="E03F929F">
    <property type="entry name" value="Stress granule"/>
</dbReference>
<dbReference type="EvolutionaryTrace" id="P46672"/>
<dbReference type="PRO" id="PR:P46672"/>
<dbReference type="Proteomes" id="UP000002311">
    <property type="component" value="Chromosome VII"/>
</dbReference>
<dbReference type="RNAct" id="P46672">
    <property type="molecule type" value="protein"/>
</dbReference>
<dbReference type="GO" id="GO:0005737">
    <property type="term" value="C:cytoplasm"/>
    <property type="evidence" value="ECO:0000314"/>
    <property type="project" value="SGD"/>
</dbReference>
<dbReference type="GO" id="GO:0010494">
    <property type="term" value="C:cytoplasmic stress granule"/>
    <property type="evidence" value="ECO:0000314"/>
    <property type="project" value="SGD"/>
</dbReference>
<dbReference type="GO" id="GO:0017102">
    <property type="term" value="C:methionyl glutamyl tRNA synthetase complex"/>
    <property type="evidence" value="ECO:0000315"/>
    <property type="project" value="SGD"/>
</dbReference>
<dbReference type="GO" id="GO:0008047">
    <property type="term" value="F:enzyme activator activity"/>
    <property type="evidence" value="ECO:0000314"/>
    <property type="project" value="SGD"/>
</dbReference>
<dbReference type="GO" id="GO:0080025">
    <property type="term" value="F:phosphatidylinositol-3,5-bisphosphate binding"/>
    <property type="evidence" value="ECO:0000314"/>
    <property type="project" value="SGD"/>
</dbReference>
<dbReference type="GO" id="GO:0032266">
    <property type="term" value="F:phosphatidylinositol-3-phosphate binding"/>
    <property type="evidence" value="ECO:0000314"/>
    <property type="project" value="SGD"/>
</dbReference>
<dbReference type="GO" id="GO:0000049">
    <property type="term" value="F:tRNA binding"/>
    <property type="evidence" value="ECO:0000315"/>
    <property type="project" value="SGD"/>
</dbReference>
<dbReference type="GO" id="GO:0006424">
    <property type="term" value="P:glutamyl-tRNA aminoacylation"/>
    <property type="evidence" value="ECO:0000303"/>
    <property type="project" value="ComplexPortal"/>
</dbReference>
<dbReference type="GO" id="GO:0006431">
    <property type="term" value="P:methionyl-tRNA aminoacylation"/>
    <property type="evidence" value="ECO:0000303"/>
    <property type="project" value="ComplexPortal"/>
</dbReference>
<dbReference type="GO" id="GO:0006418">
    <property type="term" value="P:tRNA aminoacylation for protein translation"/>
    <property type="evidence" value="ECO:0000315"/>
    <property type="project" value="SGD"/>
</dbReference>
<dbReference type="CDD" id="cd10304">
    <property type="entry name" value="GST_C_Arc1p_N_like"/>
    <property type="match status" value="1"/>
</dbReference>
<dbReference type="CDD" id="cd02799">
    <property type="entry name" value="tRNA_bind_EMAP-II_like"/>
    <property type="match status" value="1"/>
</dbReference>
<dbReference type="FunFam" id="1.20.1050.10:FF:000064">
    <property type="entry name" value="tRNA-aminoacylation cofactor ARC1"/>
    <property type="match status" value="1"/>
</dbReference>
<dbReference type="FunFam" id="2.40.50.140:FF:000199">
    <property type="entry name" value="tRNA-aminoacylation cofactor ARC1"/>
    <property type="match status" value="1"/>
</dbReference>
<dbReference type="Gene3D" id="1.20.1050.10">
    <property type="match status" value="1"/>
</dbReference>
<dbReference type="Gene3D" id="2.40.50.140">
    <property type="entry name" value="Nucleic acid-binding proteins"/>
    <property type="match status" value="1"/>
</dbReference>
<dbReference type="InterPro" id="IPR053836">
    <property type="entry name" value="Arc1-like_N"/>
</dbReference>
<dbReference type="InterPro" id="IPR036282">
    <property type="entry name" value="Glutathione-S-Trfase_C_sf"/>
</dbReference>
<dbReference type="InterPro" id="IPR012340">
    <property type="entry name" value="NA-bd_OB-fold"/>
</dbReference>
<dbReference type="InterPro" id="IPR002547">
    <property type="entry name" value="tRNA-bd_dom"/>
</dbReference>
<dbReference type="InterPro" id="IPR051270">
    <property type="entry name" value="Tyrosine-tRNA_ligase_regulator"/>
</dbReference>
<dbReference type="PANTHER" id="PTHR11586:SF33">
    <property type="entry name" value="AMINOACYL TRNA SYNTHASE COMPLEX-INTERACTING MULTIFUNCTIONAL PROTEIN 1"/>
    <property type="match status" value="1"/>
</dbReference>
<dbReference type="PANTHER" id="PTHR11586">
    <property type="entry name" value="TRNA-AMINOACYLATION COFACTOR ARC1 FAMILY MEMBER"/>
    <property type="match status" value="1"/>
</dbReference>
<dbReference type="Pfam" id="PF21972">
    <property type="entry name" value="Arc1p_N_like"/>
    <property type="match status" value="1"/>
</dbReference>
<dbReference type="Pfam" id="PF01588">
    <property type="entry name" value="tRNA_bind"/>
    <property type="match status" value="1"/>
</dbReference>
<dbReference type="SUPFAM" id="SSF47616">
    <property type="entry name" value="GST C-terminal domain-like"/>
    <property type="match status" value="1"/>
</dbReference>
<dbReference type="SUPFAM" id="SSF50249">
    <property type="entry name" value="Nucleic acid-binding proteins"/>
    <property type="match status" value="1"/>
</dbReference>
<dbReference type="PROSITE" id="PS50886">
    <property type="entry name" value="TRBD"/>
    <property type="match status" value="1"/>
</dbReference>
<name>ARC1_YEAST</name>
<proteinExistence type="evidence at protein level"/>
<protein>
    <recommendedName>
        <fullName>tRNA-aminoacylation cofactor ARC1</fullName>
    </recommendedName>
    <alternativeName>
        <fullName>Acyl-RNA-complex protein 1</fullName>
    </alternativeName>
    <alternativeName>
        <fullName>GU4 nucleic-binding protein 1</fullName>
        <shortName>G4p1 protein</shortName>
    </alternativeName>
    <alternativeName>
        <fullName>P42</fullName>
    </alternativeName>
    <alternativeName>
        <fullName>tRNA-interacting factor ARC1</fullName>
    </alternativeName>
</protein>
<gene>
    <name type="primary">ARC1</name>
    <name type="synonym">G4P1</name>
    <name type="ordered locus">YGL105W</name>
    <name type="ORF">G3085</name>
</gene>
<comment type="function">
    <text evidence="3 8 10 11">Binds to tRNA and functions as a cofactor for the methionyl-tRNA synthetase (MetRS) and glutamyl-tRNA synthetase (GluRS). Forms a complex with MetRS and GluRS and increases their affinity for cognate tRNAs due to the presence of a tRNA binding domain in its middle and C-terminal part. Binds specifically G4 quadruplex nucleic acid structures (these are four-stranded right-handed helices, stabilized by guanine base quartets). Also required for cytoplasmic confinement of the synthetases and tRNA.</text>
</comment>
<comment type="subunit">
    <text evidence="3 4 9 10 11">Component of a yeast aminoacyl-tRNA synthase (aaRS) complex formed by methionyl-tRNA synthase MES1, glutamyl-tRNA synthase GUS1 and the tRNA aminoacylation cofactor ARC1 in a stoichiometric complex. Interacts (via N-ter) with MES1 (via N-ter) and GUS1 (via N-ter). Can also form a stable binary complex with either MES1 or GUS1 that is functional in terms of aminoacylation.</text>
</comment>
<comment type="interaction">
    <interactant intactId="EBI-7224">
        <id>P46672</id>
    </interactant>
    <interactant intactId="EBI-18665">
        <id>P46655</id>
        <label>GUS1</label>
    </interactant>
    <organismsDiffer>false</organismsDiffer>
    <experiments>8</experiments>
</comment>
<comment type="interaction">
    <interactant intactId="EBI-7224">
        <id>P46672</id>
    </interactant>
    <interactant intactId="EBI-18762">
        <id>P00958</id>
        <label>MES1</label>
    </interactant>
    <organismsDiffer>false</organismsDiffer>
    <experiments>8</experiments>
</comment>
<comment type="subcellular location">
    <subcellularLocation>
        <location evidence="4 6 8 10">Cytoplasm</location>
    </subcellularLocation>
    <text>Largely excluded from the nucleus.</text>
</comment>
<comment type="miscellaneous">
    <text evidence="5">Present with 57700 molecules/cell in log phase SD medium.</text>
</comment>
<comment type="similarity">
    <text evidence="12">Belongs to the tRNA-aminoacylation cofactor ARC1 family.</text>
</comment>
<sequence>MSDLVTKFESLIISKYPVSFTKEQSAQAAQWESVLKSGQIQPHLDQLNLVLRDNTFIVSTLYPTSTDVHVFEVALPLIKDLVASSKDVKSTYTTYRHILRWIDYMQNLLEVSSTDKLEINHDLDLPHEVIEKKKKAPAGGAADAAAKADEDVSKKAKKQDHPRGKPDEETLKKLREEAKAKKAAKKAANAKQQQEQQNKAPEKPKPSAIDFRVGFIQKAIKHPDADSLYVSTIDVGDEEGPRTVCSGLVKHFPLDAMQERYVVVVCNLKPVNMRGIKSTAMVLCGSNDDKVEFVEPPKDSKAGDKVFFEGFGDEAPMKQLNPKKKIWEHLQPHFTTNDGLEVIFKDEEEKDHPVRKLTNAKGESFKVASIANAQVR</sequence>
<evidence type="ECO:0000255" key="1">
    <source>
        <dbReference type="PROSITE-ProRule" id="PRU00209"/>
    </source>
</evidence>
<evidence type="ECO:0000256" key="2">
    <source>
        <dbReference type="SAM" id="MobiDB-lite"/>
    </source>
</evidence>
<evidence type="ECO:0000269" key="3">
    <source>
    </source>
</evidence>
<evidence type="ECO:0000269" key="4">
    <source>
    </source>
</evidence>
<evidence type="ECO:0000269" key="5">
    <source>
    </source>
</evidence>
<evidence type="ECO:0000269" key="6">
    <source>
    </source>
</evidence>
<evidence type="ECO:0000269" key="7">
    <source>
    </source>
</evidence>
<evidence type="ECO:0000269" key="8">
    <source>
    </source>
</evidence>
<evidence type="ECO:0000269" key="9">
    <source>
    </source>
</evidence>
<evidence type="ECO:0000269" key="10">
    <source>
    </source>
</evidence>
<evidence type="ECO:0000269" key="11">
    <source>
    </source>
</evidence>
<evidence type="ECO:0000305" key="12"/>
<evidence type="ECO:0007829" key="13">
    <source>
        <dbReference type="PDB" id="2HQT"/>
    </source>
</evidence>
<evidence type="ECO:0007829" key="14">
    <source>
        <dbReference type="PDB" id="2HRK"/>
    </source>
</evidence>
<evidence type="ECO:0007829" key="15">
    <source>
        <dbReference type="PDB" id="4R1J"/>
    </source>
</evidence>
<accession>P46672</accession>
<accession>D6VU41</accession>
<reference key="1">
    <citation type="journal article" date="1995" name="J. Biol. Chem.">
        <title>A novel yeast gene product, G4p1, with a specific affinity for quadruplex nucleic acids.</title>
        <authorList>
            <person name="Frantz J.D."/>
            <person name="Gilbert W."/>
        </authorList>
    </citation>
    <scope>NUCLEOTIDE SEQUENCE [GENOMIC DNA]</scope>
    <scope>PROTEIN SEQUENCE OF 53-75 AND 102-123</scope>
    <source>
        <strain>ATCC 204508 / S288c</strain>
    </source>
</reference>
<reference key="2">
    <citation type="journal article" date="1996" name="EMBO J.">
        <title>The yeast protein Arc1p binds to tRNA and functions as a cofactor for the methionyl- and glutamyl-tRNA synthetases.</title>
        <authorList>
            <person name="Simos G."/>
            <person name="Segref A."/>
            <person name="Fasiolo F."/>
            <person name="Hellmuth K."/>
            <person name="Shevshenko A."/>
            <person name="Mann M."/>
            <person name="Hurt E.C."/>
        </authorList>
    </citation>
    <scope>NUCLEOTIDE SEQUENCE [GENOMIC DNA]</scope>
    <scope>FUNCTION</scope>
    <scope>TRNA-BINDING</scope>
    <scope>INTERACTION WITH GUS1 AND MES1</scope>
    <scope>SUBCELLULAR LOCATION</scope>
    <source>
        <strain>JU4.2XJR26.19B</strain>
    </source>
</reference>
<reference key="3">
    <citation type="journal article" date="1997" name="Yeast">
        <title>The genes encoding the transcription factor yTAFII60, the G4p1 protein and a putative glucose transporter are contained in a 12.3 kb DNA fragment on the left arm of Saccharomyces cerevisiae chromosome VII.</title>
        <authorList>
            <person name="Paoluzi S."/>
            <person name="Minenkova O."/>
            <person name="Castagnoli L."/>
        </authorList>
    </citation>
    <scope>NUCLEOTIDE SEQUENCE [GENOMIC DNA]</scope>
</reference>
<reference key="4">
    <citation type="journal article" date="1997" name="Nature">
        <title>The nucleotide sequence of Saccharomyces cerevisiae chromosome VII.</title>
        <authorList>
            <person name="Tettelin H."/>
            <person name="Agostoni-Carbone M.L."/>
            <person name="Albermann K."/>
            <person name="Albers M."/>
            <person name="Arroyo J."/>
            <person name="Backes U."/>
            <person name="Barreiros T."/>
            <person name="Bertani I."/>
            <person name="Bjourson A.J."/>
            <person name="Brueckner M."/>
            <person name="Bruschi C.V."/>
            <person name="Carignani G."/>
            <person name="Castagnoli L."/>
            <person name="Cerdan E."/>
            <person name="Clemente M.L."/>
            <person name="Coblenz A."/>
            <person name="Coglievina M."/>
            <person name="Coissac E."/>
            <person name="Defoor E."/>
            <person name="Del Bino S."/>
            <person name="Delius H."/>
            <person name="Delneri D."/>
            <person name="de Wergifosse P."/>
            <person name="Dujon B."/>
            <person name="Durand P."/>
            <person name="Entian K.-D."/>
            <person name="Eraso P."/>
            <person name="Escribano V."/>
            <person name="Fabiani L."/>
            <person name="Fartmann B."/>
            <person name="Feroli F."/>
            <person name="Feuermann M."/>
            <person name="Frontali L."/>
            <person name="Garcia-Gonzalez M."/>
            <person name="Garcia-Saez M.I."/>
            <person name="Goffeau A."/>
            <person name="Guerreiro P."/>
            <person name="Hani J."/>
            <person name="Hansen M."/>
            <person name="Hebling U."/>
            <person name="Hernandez K."/>
            <person name="Heumann K."/>
            <person name="Hilger F."/>
            <person name="Hofmann B."/>
            <person name="Indge K.J."/>
            <person name="James C.M."/>
            <person name="Klima R."/>
            <person name="Koetter P."/>
            <person name="Kramer B."/>
            <person name="Kramer W."/>
            <person name="Lauquin G."/>
            <person name="Leuther H."/>
            <person name="Louis E.J."/>
            <person name="Maillier E."/>
            <person name="Marconi A."/>
            <person name="Martegani E."/>
            <person name="Mazon M.J."/>
            <person name="Mazzoni C."/>
            <person name="McReynolds A.D.K."/>
            <person name="Melchioretto P."/>
            <person name="Mewes H.-W."/>
            <person name="Minenkova O."/>
            <person name="Mueller-Auer S."/>
            <person name="Nawrocki A."/>
            <person name="Netter P."/>
            <person name="Neu R."/>
            <person name="Nombela C."/>
            <person name="Oliver S.G."/>
            <person name="Panzeri L."/>
            <person name="Paoluzi S."/>
            <person name="Plevani P."/>
            <person name="Portetelle D."/>
            <person name="Portillo F."/>
            <person name="Potier S."/>
            <person name="Purnelle B."/>
            <person name="Rieger M."/>
            <person name="Riles L."/>
            <person name="Rinaldi T."/>
            <person name="Robben J."/>
            <person name="Rodrigues-Pousada C."/>
            <person name="Rodriguez-Belmonte E."/>
            <person name="Rodriguez-Torres A.M."/>
            <person name="Rose M."/>
            <person name="Ruzzi M."/>
            <person name="Saliola M."/>
            <person name="Sanchez-Perez M."/>
            <person name="Schaefer B."/>
            <person name="Schaefer M."/>
            <person name="Scharfe M."/>
            <person name="Schmidheini T."/>
            <person name="Schreer A."/>
            <person name="Skala J."/>
            <person name="Souciet J.-L."/>
            <person name="Steensma H.Y."/>
            <person name="Talla E."/>
            <person name="Thierry A."/>
            <person name="Vandenbol M."/>
            <person name="van der Aart Q.J.M."/>
            <person name="Van Dyck L."/>
            <person name="Vanoni M."/>
            <person name="Verhasselt P."/>
            <person name="Voet M."/>
            <person name="Volckaert G."/>
            <person name="Wambutt R."/>
            <person name="Watson M.D."/>
            <person name="Weber N."/>
            <person name="Wedler E."/>
            <person name="Wedler H."/>
            <person name="Wipfli P."/>
            <person name="Wolf K."/>
            <person name="Wright L.F."/>
            <person name="Zaccaria P."/>
            <person name="Zimmermann M."/>
            <person name="Zollner A."/>
            <person name="Kleine K."/>
        </authorList>
    </citation>
    <scope>NUCLEOTIDE SEQUENCE [LARGE SCALE GENOMIC DNA]</scope>
    <source>
        <strain>ATCC 204508 / S288c</strain>
    </source>
</reference>
<reference key="5">
    <citation type="journal article" date="2014" name="G3 (Bethesda)">
        <title>The reference genome sequence of Saccharomyces cerevisiae: Then and now.</title>
        <authorList>
            <person name="Engel S.R."/>
            <person name="Dietrich F.S."/>
            <person name="Fisk D.G."/>
            <person name="Binkley G."/>
            <person name="Balakrishnan R."/>
            <person name="Costanzo M.C."/>
            <person name="Dwight S.S."/>
            <person name="Hitz B.C."/>
            <person name="Karra K."/>
            <person name="Nash R.S."/>
            <person name="Weng S."/>
            <person name="Wong E.D."/>
            <person name="Lloyd P."/>
            <person name="Skrzypek M.S."/>
            <person name="Miyasato S.R."/>
            <person name="Simison M."/>
            <person name="Cherry J.M."/>
        </authorList>
    </citation>
    <scope>GENOME REANNOTATION</scope>
    <source>
        <strain>ATCC 204508 / S288c</strain>
    </source>
</reference>
<reference key="6">
    <citation type="journal article" date="2007" name="Genome Res.">
        <title>Approaching a complete repository of sequence-verified protein-encoding clones for Saccharomyces cerevisiae.</title>
        <authorList>
            <person name="Hu Y."/>
            <person name="Rolfs A."/>
            <person name="Bhullar B."/>
            <person name="Murthy T.V.S."/>
            <person name="Zhu C."/>
            <person name="Berger M.F."/>
            <person name="Camargo A.A."/>
            <person name="Kelley F."/>
            <person name="McCarron S."/>
            <person name="Jepson D."/>
            <person name="Richardson A."/>
            <person name="Raphael J."/>
            <person name="Moreira D."/>
            <person name="Taycher E."/>
            <person name="Zuo D."/>
            <person name="Mohr S."/>
            <person name="Kane M.F."/>
            <person name="Williamson J."/>
            <person name="Simpson A.J.G."/>
            <person name="Bulyk M.L."/>
            <person name="Harlow E."/>
            <person name="Marsischky G."/>
            <person name="Kolodner R.D."/>
            <person name="LaBaer J."/>
        </authorList>
    </citation>
    <scope>NUCLEOTIDE SEQUENCE [GENOMIC DNA]</scope>
    <source>
        <strain>ATCC 204508 / S288c</strain>
    </source>
</reference>
<reference key="7">
    <citation type="journal article" date="1998" name="Mol. Cell">
        <title>A conserved domain within Arc1p delivers tRNA to aminoacyl-tRNA synthetases.</title>
        <authorList>
            <person name="Simos G."/>
            <person name="Sauer A."/>
            <person name="Fasiolo F."/>
            <person name="Hurt E.C."/>
        </authorList>
    </citation>
    <scope>FUNCTION</scope>
    <scope>TRNA BINDING</scope>
    <scope>INTERACTION WITH GUS1 AND MES1</scope>
</reference>
<reference key="8">
    <citation type="journal article" date="2001" name="EMBO J.">
        <title>The intracellular location of two aminoacyl-tRNA synthetases depends on complex formation with Arc1p.</title>
        <authorList>
            <person name="Galani K."/>
            <person name="Grosshans H."/>
            <person name="Deinert K."/>
            <person name="Hurt E.C."/>
            <person name="Simos G."/>
        </authorList>
    </citation>
    <scope>SUBUNIT</scope>
    <scope>INTERACTION WITH GUS1 AND MES1</scope>
    <scope>SUBCELLULAR LOCATION</scope>
</reference>
<reference key="9">
    <citation type="journal article" date="2001" name="J. Biol. Chem.">
        <title>Arc1p organizes the yeast aminoacyl-tRNA synthetase complex and stabilizes its interaction with the cognate tRNAs.</title>
        <authorList>
            <person name="Deinert K."/>
            <person name="Fasiolo F."/>
            <person name="Hurt E.C."/>
            <person name="Simos G."/>
        </authorList>
    </citation>
    <scope>FUNCTION</scope>
    <scope>TRNA-BINDING</scope>
    <scope>INTERACTION WITH GUS1 AND MES1</scope>
</reference>
<reference key="10">
    <citation type="journal article" date="2003" name="Nature">
        <title>Global analysis of protein expression in yeast.</title>
        <authorList>
            <person name="Ghaemmaghami S."/>
            <person name="Huh W.-K."/>
            <person name="Bower K."/>
            <person name="Howson R.W."/>
            <person name="Belle A."/>
            <person name="Dephoure N."/>
            <person name="O'Shea E.K."/>
            <person name="Weissman J.S."/>
        </authorList>
    </citation>
    <scope>LEVEL OF PROTEIN EXPRESSION [LARGE SCALE ANALYSIS]</scope>
</reference>
<reference key="11">
    <citation type="journal article" date="2005" name="FEBS Lett.">
        <title>The tRNA aminoacylation co-factor Arc1p is excluded from the nucleus by an Xpo1p-dependent mechanism.</title>
        <authorList>
            <person name="Galani K."/>
            <person name="Hurt E."/>
            <person name="Simos G."/>
        </authorList>
    </citation>
    <scope>SUBCELLULAR LOCATION</scope>
</reference>
<reference key="12">
    <citation type="journal article" date="2007" name="Mol. Cell. Biochem.">
        <title>Arc1p is required for cytoplasmic confinement of synthetases and tRNA.</title>
        <authorList>
            <person name="Golinelli-Cohen M.P."/>
            <person name="Mirande M."/>
        </authorList>
    </citation>
    <scope>FUNCTION</scope>
    <scope>SUBCELLULAR LOCATION</scope>
</reference>
<reference key="13">
    <citation type="journal article" date="2006" name="Acta Crystallogr. D">
        <title>Structures of the interacting domains from yeast glutamyl-tRNA synthetase and tRNA-aminoacylation and nuclear-export cofactor Arc1p reveal a novel function for an old fold.</title>
        <authorList>
            <person name="Simader H."/>
            <person name="Hothorn M."/>
            <person name="Suck D."/>
        </authorList>
    </citation>
    <scope>X-RAY CRYSTALLOGRAPHY (1.9 ANGSTROMS) OF 1-122</scope>
    <scope>INTERACTION WITH GUS1</scope>
</reference>
<reference key="14">
    <citation type="journal article" date="2006" name="Nucleic Acids Res.">
        <title>Structural basis of yeast aminoacyl-tRNA synthetase complex formation revealed by crystal structures of two binary sub-complexes.</title>
        <authorList>
            <person name="Simader H."/>
            <person name="Hothorn M."/>
            <person name="Koehler C."/>
            <person name="Basquin J."/>
            <person name="Simos G."/>
            <person name="Suck D."/>
        </authorList>
    </citation>
    <scope>X-RAY CRYSTALLOGRAPHY (2.2 ANGSTROMS) OF 1-122 IN COMPLEXES WITH GUS1 AND MES1</scope>
    <scope>MUTAGENESIS OF ALA-26 AND ARG-100</scope>
</reference>
<organism>
    <name type="scientific">Saccharomyces cerevisiae (strain ATCC 204508 / S288c)</name>
    <name type="common">Baker's yeast</name>
    <dbReference type="NCBI Taxonomy" id="559292"/>
    <lineage>
        <taxon>Eukaryota</taxon>
        <taxon>Fungi</taxon>
        <taxon>Dikarya</taxon>
        <taxon>Ascomycota</taxon>
        <taxon>Saccharomycotina</taxon>
        <taxon>Saccharomycetes</taxon>
        <taxon>Saccharomycetales</taxon>
        <taxon>Saccharomycetaceae</taxon>
        <taxon>Saccharomyces</taxon>
    </lineage>
</organism>
<keyword id="KW-0002">3D-structure</keyword>
<keyword id="KW-0963">Cytoplasm</keyword>
<keyword id="KW-0903">Direct protein sequencing</keyword>
<keyword id="KW-1185">Reference proteome</keyword>
<keyword id="KW-0694">RNA-binding</keyword>
<keyword id="KW-0820">tRNA-binding</keyword>
<feature type="chain" id="PRO_0000087409" description="tRNA-aminoacylation cofactor ARC1">
    <location>
        <begin position="1"/>
        <end position="376"/>
    </location>
</feature>
<feature type="domain" description="tRNA-binding" evidence="1">
    <location>
        <begin position="205"/>
        <end position="307"/>
    </location>
</feature>
<feature type="region of interest" description="Interaction with methionyl-tRNA synthetase MES1">
    <location>
        <begin position="22"/>
        <end position="46"/>
    </location>
</feature>
<feature type="region of interest" description="Interaction with glutamyl-tRNA synthetase GUS1">
    <location>
        <begin position="52"/>
        <end position="61"/>
    </location>
</feature>
<feature type="region of interest" description="Interaction with glutamyl-tRNA synthetase GUS1">
    <location>
        <begin position="91"/>
        <end position="121"/>
    </location>
</feature>
<feature type="region of interest" description="Disordered" evidence="2">
    <location>
        <begin position="133"/>
        <end position="206"/>
    </location>
</feature>
<feature type="compositionally biased region" description="Basic and acidic residues" evidence="2">
    <location>
        <begin position="146"/>
        <end position="180"/>
    </location>
</feature>
<feature type="compositionally biased region" description="Low complexity" evidence="2">
    <location>
        <begin position="186"/>
        <end position="199"/>
    </location>
</feature>
<feature type="mutagenesis site" description="Abolishes interaction with MES1." evidence="7">
    <original>A</original>
    <variation>R</variation>
    <location>
        <position position="26"/>
    </location>
</feature>
<feature type="mutagenesis site" description="Abolishes interaction with GUS1." evidence="7">
    <original>R</original>
    <variation>A</variation>
    <location>
        <position position="100"/>
    </location>
</feature>
<feature type="sequence conflict" description="In Ref. 1; AAC49072." evidence="12" ref="1">
    <original>PAGGAADAAAKAD</original>
    <variation>LRVALLMLQQGS</variation>
    <location>
        <begin position="137"/>
        <end position="149"/>
    </location>
</feature>
<feature type="sequence conflict" description="In Ref. 1; AAC49072." evidence="12" ref="1">
    <original>KK</original>
    <variation>LL</variation>
    <location>
        <begin position="181"/>
        <end position="182"/>
    </location>
</feature>
<feature type="helix" evidence="13">
    <location>
        <begin position="3"/>
        <end position="9"/>
    </location>
</feature>
<feature type="helix" evidence="14">
    <location>
        <begin position="12"/>
        <end position="15"/>
    </location>
</feature>
<feature type="helix" evidence="13">
    <location>
        <begin position="22"/>
        <end position="36"/>
    </location>
</feature>
<feature type="helix" evidence="13">
    <location>
        <begin position="41"/>
        <end position="43"/>
    </location>
</feature>
<feature type="helix" evidence="13">
    <location>
        <begin position="44"/>
        <end position="53"/>
    </location>
</feature>
<feature type="helix" evidence="13">
    <location>
        <begin position="65"/>
        <end position="83"/>
    </location>
</feature>
<feature type="helix" evidence="13">
    <location>
        <begin position="88"/>
        <end position="94"/>
    </location>
</feature>
<feature type="helix" evidence="13">
    <location>
        <begin position="96"/>
        <end position="108"/>
    </location>
</feature>
<feature type="turn" evidence="13">
    <location>
        <begin position="113"/>
        <end position="115"/>
    </location>
</feature>
<feature type="helix" evidence="15">
    <location>
        <begin position="206"/>
        <end position="208"/>
    </location>
</feature>
<feature type="strand" evidence="15">
    <location>
        <begin position="211"/>
        <end position="221"/>
    </location>
</feature>
<feature type="strand" evidence="15">
    <location>
        <begin position="229"/>
        <end position="234"/>
    </location>
</feature>
<feature type="strand" evidence="15">
    <location>
        <begin position="242"/>
        <end position="247"/>
    </location>
</feature>
<feature type="turn" evidence="15">
    <location>
        <begin position="249"/>
        <end position="251"/>
    </location>
</feature>
<feature type="helix" evidence="15">
    <location>
        <begin position="254"/>
        <end position="257"/>
    </location>
</feature>
<feature type="strand" evidence="15">
    <location>
        <begin position="261"/>
        <end position="265"/>
    </location>
</feature>
<feature type="strand" evidence="15">
    <location>
        <begin position="271"/>
        <end position="273"/>
    </location>
</feature>
<feature type="strand" evidence="15">
    <location>
        <begin position="276"/>
        <end position="278"/>
    </location>
</feature>
<feature type="strand" evidence="15">
    <location>
        <begin position="284"/>
        <end position="286"/>
    </location>
</feature>
<feature type="strand" evidence="15">
    <location>
        <begin position="291"/>
        <end position="293"/>
    </location>
</feature>
<feature type="strand" evidence="15">
    <location>
        <begin position="305"/>
        <end position="308"/>
    </location>
</feature>
<feature type="helix" evidence="15">
    <location>
        <begin position="322"/>
        <end position="324"/>
    </location>
</feature>
<feature type="helix" evidence="15">
    <location>
        <begin position="326"/>
        <end position="330"/>
    </location>
</feature>
<feature type="helix" evidence="15">
    <location>
        <begin position="331"/>
        <end position="333"/>
    </location>
</feature>
<feature type="strand" evidence="15">
    <location>
        <begin position="334"/>
        <end position="336"/>
    </location>
</feature>
<feature type="strand" evidence="15">
    <location>
        <begin position="341"/>
        <end position="345"/>
    </location>
</feature>
<feature type="strand" evidence="15">
    <location>
        <begin position="354"/>
        <end position="359"/>
    </location>
</feature>
<feature type="strand" evidence="15">
    <location>
        <begin position="374"/>
        <end position="376"/>
    </location>
</feature>